<name>RL11_PROM9</name>
<gene>
    <name evidence="1" type="primary">rplK</name>
    <name evidence="1" type="synonym">rpl11</name>
    <name type="ordered locus">PMT9312_0206</name>
</gene>
<protein>
    <recommendedName>
        <fullName evidence="1">Large ribosomal subunit protein uL11</fullName>
    </recommendedName>
    <alternativeName>
        <fullName evidence="2">50S ribosomal protein L11</fullName>
    </alternativeName>
</protein>
<sequence>MAKKIVAVIKLALQAGKANPAPPVGPALGQHGVNIMAFCKEYNAKTQDKAGFVIPVEISVFEDRSFTFITKTPPAAVLITKAAGIDKGSGESSKGSVGNISKAQLEEIAKTKLPDLNCSSVESAMKVIEGTARNMGVSITD</sequence>
<feature type="chain" id="PRO_0000258184" description="Large ribosomal subunit protein uL11">
    <location>
        <begin position="1"/>
        <end position="141"/>
    </location>
</feature>
<keyword id="KW-0488">Methylation</keyword>
<keyword id="KW-0687">Ribonucleoprotein</keyword>
<keyword id="KW-0689">Ribosomal protein</keyword>
<keyword id="KW-0694">RNA-binding</keyword>
<keyword id="KW-0699">rRNA-binding</keyword>
<comment type="function">
    <text evidence="1">Forms part of the ribosomal stalk which helps the ribosome interact with GTP-bound translation factors.</text>
</comment>
<comment type="subunit">
    <text evidence="1">Part of the ribosomal stalk of the 50S ribosomal subunit. Interacts with L10 and the large rRNA to form the base of the stalk. L10 forms an elongated spine to which L12 dimers bind in a sequential fashion forming a multimeric L10(L12)X complex.</text>
</comment>
<comment type="PTM">
    <text evidence="1">One or more lysine residues are methylated.</text>
</comment>
<comment type="similarity">
    <text evidence="1">Belongs to the universal ribosomal protein uL11 family.</text>
</comment>
<proteinExistence type="inferred from homology"/>
<accession>Q31CX7</accession>
<organism>
    <name type="scientific">Prochlorococcus marinus (strain MIT 9312)</name>
    <dbReference type="NCBI Taxonomy" id="74546"/>
    <lineage>
        <taxon>Bacteria</taxon>
        <taxon>Bacillati</taxon>
        <taxon>Cyanobacteriota</taxon>
        <taxon>Cyanophyceae</taxon>
        <taxon>Synechococcales</taxon>
        <taxon>Prochlorococcaceae</taxon>
        <taxon>Prochlorococcus</taxon>
    </lineage>
</organism>
<dbReference type="EMBL" id="CP000111">
    <property type="protein sequence ID" value="ABB49268.1"/>
    <property type="molecule type" value="Genomic_DNA"/>
</dbReference>
<dbReference type="RefSeq" id="WP_011375772.1">
    <property type="nucleotide sequence ID" value="NC_007577.1"/>
</dbReference>
<dbReference type="SMR" id="Q31CX7"/>
<dbReference type="STRING" id="74546.PMT9312_0206"/>
<dbReference type="KEGG" id="pmi:PMT9312_0206"/>
<dbReference type="eggNOG" id="COG0080">
    <property type="taxonomic scope" value="Bacteria"/>
</dbReference>
<dbReference type="HOGENOM" id="CLU_074237_2_1_3"/>
<dbReference type="OrthoDB" id="9802408at2"/>
<dbReference type="Proteomes" id="UP000002715">
    <property type="component" value="Chromosome"/>
</dbReference>
<dbReference type="GO" id="GO:0022625">
    <property type="term" value="C:cytosolic large ribosomal subunit"/>
    <property type="evidence" value="ECO:0007669"/>
    <property type="project" value="TreeGrafter"/>
</dbReference>
<dbReference type="GO" id="GO:0070180">
    <property type="term" value="F:large ribosomal subunit rRNA binding"/>
    <property type="evidence" value="ECO:0007669"/>
    <property type="project" value="UniProtKB-UniRule"/>
</dbReference>
<dbReference type="GO" id="GO:0003735">
    <property type="term" value="F:structural constituent of ribosome"/>
    <property type="evidence" value="ECO:0007669"/>
    <property type="project" value="InterPro"/>
</dbReference>
<dbReference type="GO" id="GO:0006412">
    <property type="term" value="P:translation"/>
    <property type="evidence" value="ECO:0007669"/>
    <property type="project" value="UniProtKB-UniRule"/>
</dbReference>
<dbReference type="CDD" id="cd00349">
    <property type="entry name" value="Ribosomal_L11"/>
    <property type="match status" value="1"/>
</dbReference>
<dbReference type="FunFam" id="1.10.10.250:FF:000001">
    <property type="entry name" value="50S ribosomal protein L11"/>
    <property type="match status" value="1"/>
</dbReference>
<dbReference type="FunFam" id="3.30.1550.10:FF:000001">
    <property type="entry name" value="50S ribosomal protein L11"/>
    <property type="match status" value="1"/>
</dbReference>
<dbReference type="Gene3D" id="1.10.10.250">
    <property type="entry name" value="Ribosomal protein L11, C-terminal domain"/>
    <property type="match status" value="1"/>
</dbReference>
<dbReference type="Gene3D" id="3.30.1550.10">
    <property type="entry name" value="Ribosomal protein L11/L12, N-terminal domain"/>
    <property type="match status" value="1"/>
</dbReference>
<dbReference type="HAMAP" id="MF_00736">
    <property type="entry name" value="Ribosomal_uL11"/>
    <property type="match status" value="1"/>
</dbReference>
<dbReference type="InterPro" id="IPR000911">
    <property type="entry name" value="Ribosomal_uL11"/>
</dbReference>
<dbReference type="InterPro" id="IPR006519">
    <property type="entry name" value="Ribosomal_uL11_bac-typ"/>
</dbReference>
<dbReference type="InterPro" id="IPR020783">
    <property type="entry name" value="Ribosomal_uL11_C"/>
</dbReference>
<dbReference type="InterPro" id="IPR036769">
    <property type="entry name" value="Ribosomal_uL11_C_sf"/>
</dbReference>
<dbReference type="InterPro" id="IPR020785">
    <property type="entry name" value="Ribosomal_uL11_CS"/>
</dbReference>
<dbReference type="InterPro" id="IPR020784">
    <property type="entry name" value="Ribosomal_uL11_N"/>
</dbReference>
<dbReference type="InterPro" id="IPR036796">
    <property type="entry name" value="Ribosomal_uL11_N_sf"/>
</dbReference>
<dbReference type="NCBIfam" id="TIGR01632">
    <property type="entry name" value="L11_bact"/>
    <property type="match status" value="1"/>
</dbReference>
<dbReference type="PANTHER" id="PTHR11661">
    <property type="entry name" value="60S RIBOSOMAL PROTEIN L12"/>
    <property type="match status" value="1"/>
</dbReference>
<dbReference type="PANTHER" id="PTHR11661:SF1">
    <property type="entry name" value="LARGE RIBOSOMAL SUBUNIT PROTEIN UL11M"/>
    <property type="match status" value="1"/>
</dbReference>
<dbReference type="Pfam" id="PF00298">
    <property type="entry name" value="Ribosomal_L11"/>
    <property type="match status" value="1"/>
</dbReference>
<dbReference type="Pfam" id="PF03946">
    <property type="entry name" value="Ribosomal_L11_N"/>
    <property type="match status" value="1"/>
</dbReference>
<dbReference type="SMART" id="SM00649">
    <property type="entry name" value="RL11"/>
    <property type="match status" value="1"/>
</dbReference>
<dbReference type="SUPFAM" id="SSF54747">
    <property type="entry name" value="Ribosomal L11/L12e N-terminal domain"/>
    <property type="match status" value="1"/>
</dbReference>
<dbReference type="SUPFAM" id="SSF46906">
    <property type="entry name" value="Ribosomal protein L11, C-terminal domain"/>
    <property type="match status" value="1"/>
</dbReference>
<dbReference type="PROSITE" id="PS00359">
    <property type="entry name" value="RIBOSOMAL_L11"/>
    <property type="match status" value="1"/>
</dbReference>
<evidence type="ECO:0000255" key="1">
    <source>
        <dbReference type="HAMAP-Rule" id="MF_00736"/>
    </source>
</evidence>
<evidence type="ECO:0000305" key="2"/>
<reference key="1">
    <citation type="journal article" date="2006" name="Science">
        <title>Genomic islands and the ecology and evolution of Prochlorococcus.</title>
        <authorList>
            <person name="Coleman M.L."/>
            <person name="Sullivan M.B."/>
            <person name="Martiny A.C."/>
            <person name="Steglich C."/>
            <person name="Barry K."/>
            <person name="Delong E.F."/>
            <person name="Chisholm S.W."/>
        </authorList>
    </citation>
    <scope>NUCLEOTIDE SEQUENCE [LARGE SCALE GENOMIC DNA]</scope>
    <source>
        <strain>MIT 9312</strain>
    </source>
</reference>